<dbReference type="EMBL" id="AF072727">
    <property type="protein sequence ID" value="AAD38422.1"/>
    <property type="molecule type" value="mRNA"/>
</dbReference>
<dbReference type="EMBL" id="JH000039">
    <property type="protein sequence ID" value="EGV95752.1"/>
    <property type="molecule type" value="Genomic_DNA"/>
</dbReference>
<dbReference type="EMBL" id="KE674505">
    <property type="protein sequence ID" value="ERE76342.1"/>
    <property type="molecule type" value="Genomic_DNA"/>
</dbReference>
<dbReference type="RefSeq" id="NP_001230912.1">
    <property type="nucleotide sequence ID" value="NM_001243983.1"/>
</dbReference>
<dbReference type="SMR" id="Q9WVM7"/>
<dbReference type="IntAct" id="Q9WVM7">
    <property type="interactions" value="1"/>
</dbReference>
<dbReference type="PaxDb" id="10029-NP_001230912.1"/>
<dbReference type="Ensembl" id="ENSCGRT00001021211.1">
    <property type="protein sequence ID" value="ENSCGRP00001016967.1"/>
    <property type="gene ID" value="ENSCGRG00001017144.1"/>
</dbReference>
<dbReference type="GeneID" id="100682533"/>
<dbReference type="KEGG" id="cge:100682533"/>
<dbReference type="CTD" id="7965"/>
<dbReference type="eggNOG" id="ENOG502QUNJ">
    <property type="taxonomic scope" value="Eukaryota"/>
</dbReference>
<dbReference type="GeneTree" id="ENSGT00390000015826"/>
<dbReference type="InParanoid" id="G3GVA8"/>
<dbReference type="OrthoDB" id="2309723at2759"/>
<dbReference type="Proteomes" id="UP000001075">
    <property type="component" value="Unassembled WGS sequence"/>
</dbReference>
<dbReference type="Proteomes" id="UP000030759">
    <property type="component" value="Unassembled WGS sequence"/>
</dbReference>
<dbReference type="Proteomes" id="UP000694386">
    <property type="component" value="Unplaced"/>
</dbReference>
<dbReference type="Proteomes" id="UP001108280">
    <property type="component" value="Chromosome 4"/>
</dbReference>
<dbReference type="GO" id="GO:0017101">
    <property type="term" value="C:aminoacyl-tRNA synthetase multienzyme complex"/>
    <property type="evidence" value="ECO:0000250"/>
    <property type="project" value="UniProtKB"/>
</dbReference>
<dbReference type="GO" id="GO:0005829">
    <property type="term" value="C:cytosol"/>
    <property type="evidence" value="ECO:0007669"/>
    <property type="project" value="UniProtKB-SubCell"/>
</dbReference>
<dbReference type="GO" id="GO:0005634">
    <property type="term" value="C:nucleus"/>
    <property type="evidence" value="ECO:0007669"/>
    <property type="project" value="UniProtKB-SubCell"/>
</dbReference>
<dbReference type="GO" id="GO:0060090">
    <property type="term" value="F:molecular adaptor activity"/>
    <property type="evidence" value="ECO:0007669"/>
    <property type="project" value="Ensembl"/>
</dbReference>
<dbReference type="GO" id="GO:0006915">
    <property type="term" value="P:apoptotic process"/>
    <property type="evidence" value="ECO:0007669"/>
    <property type="project" value="UniProtKB-KW"/>
</dbReference>
<dbReference type="GO" id="GO:0008285">
    <property type="term" value="P:negative regulation of cell population proliferation"/>
    <property type="evidence" value="ECO:0007669"/>
    <property type="project" value="Ensembl"/>
</dbReference>
<dbReference type="GO" id="GO:0031398">
    <property type="term" value="P:positive regulation of protein ubiquitination"/>
    <property type="evidence" value="ECO:0007669"/>
    <property type="project" value="Ensembl"/>
</dbReference>
<dbReference type="GO" id="GO:0016567">
    <property type="term" value="P:protein ubiquitination"/>
    <property type="evidence" value="ECO:0007669"/>
    <property type="project" value="Ensembl"/>
</dbReference>
<dbReference type="GO" id="GO:0065003">
    <property type="term" value="P:protein-containing complex assembly"/>
    <property type="evidence" value="ECO:0007669"/>
    <property type="project" value="Ensembl"/>
</dbReference>
<dbReference type="GO" id="GO:0006412">
    <property type="term" value="P:translation"/>
    <property type="evidence" value="ECO:0007669"/>
    <property type="project" value="UniProtKB-KW"/>
</dbReference>
<dbReference type="GO" id="GO:0060510">
    <property type="term" value="P:type II pneumocyte differentiation"/>
    <property type="evidence" value="ECO:0007669"/>
    <property type="project" value="Ensembl"/>
</dbReference>
<dbReference type="CDD" id="cd03200">
    <property type="entry name" value="GST_C_AIMP2"/>
    <property type="match status" value="1"/>
</dbReference>
<dbReference type="FunFam" id="1.20.1050.130:FF:000002">
    <property type="entry name" value="aminoacyl tRNA synthase complex-interacting multifunctional protein 2 isoform X2"/>
    <property type="match status" value="1"/>
</dbReference>
<dbReference type="Gene3D" id="1.20.1050.130">
    <property type="match status" value="1"/>
</dbReference>
<dbReference type="InterPro" id="IPR042360">
    <property type="entry name" value="AIMP2"/>
</dbReference>
<dbReference type="InterPro" id="IPR031889">
    <property type="entry name" value="AIMP2_LysRS-bd"/>
</dbReference>
<dbReference type="InterPro" id="IPR041503">
    <property type="entry name" value="AIMP2_thioredoxin"/>
</dbReference>
<dbReference type="InterPro" id="IPR036282">
    <property type="entry name" value="Glutathione-S-Trfase_C_sf"/>
</dbReference>
<dbReference type="InterPro" id="IPR004046">
    <property type="entry name" value="GST_C"/>
</dbReference>
<dbReference type="PANTHER" id="PTHR13438">
    <property type="entry name" value="AMINOACYL TRNA SYNTHASE COMPLEX-INTERACTING MULTIFUNCTIONAL PROTEIN"/>
    <property type="match status" value="1"/>
</dbReference>
<dbReference type="PANTHER" id="PTHR13438:SF2">
    <property type="entry name" value="AMINOACYL TRNA SYNTHASE COMPLEX-INTERACTING MULTIFUNCTIONAL PROTEIN 2"/>
    <property type="match status" value="1"/>
</dbReference>
<dbReference type="Pfam" id="PF16780">
    <property type="entry name" value="AIMP2_LysRS_bd"/>
    <property type="match status" value="1"/>
</dbReference>
<dbReference type="Pfam" id="PF14497">
    <property type="entry name" value="GST_C_3"/>
    <property type="match status" value="1"/>
</dbReference>
<dbReference type="Pfam" id="PF18569">
    <property type="entry name" value="Thioredoxin_16"/>
    <property type="match status" value="1"/>
</dbReference>
<dbReference type="SUPFAM" id="SSF47616">
    <property type="entry name" value="GST C-terminal domain-like"/>
    <property type="match status" value="1"/>
</dbReference>
<evidence type="ECO:0000250" key="1"/>
<evidence type="ECO:0000250" key="2">
    <source>
        <dbReference type="UniProtKB" id="Q13155"/>
    </source>
</evidence>
<evidence type="ECO:0000250" key="3">
    <source>
        <dbReference type="UniProtKB" id="Q8R010"/>
    </source>
</evidence>
<evidence type="ECO:0000256" key="4">
    <source>
        <dbReference type="SAM" id="MobiDB-lite"/>
    </source>
</evidence>
<organism>
    <name type="scientific">Cricetulus griseus</name>
    <name type="common">Chinese hamster</name>
    <name type="synonym">Cricetulus barabensis griseus</name>
    <dbReference type="NCBI Taxonomy" id="10029"/>
    <lineage>
        <taxon>Eukaryota</taxon>
        <taxon>Metazoa</taxon>
        <taxon>Chordata</taxon>
        <taxon>Craniata</taxon>
        <taxon>Vertebrata</taxon>
        <taxon>Euteleostomi</taxon>
        <taxon>Mammalia</taxon>
        <taxon>Eutheria</taxon>
        <taxon>Euarchontoglires</taxon>
        <taxon>Glires</taxon>
        <taxon>Rodentia</taxon>
        <taxon>Myomorpha</taxon>
        <taxon>Muroidea</taxon>
        <taxon>Cricetidae</taxon>
        <taxon>Cricetinae</taxon>
        <taxon>Cricetulus</taxon>
    </lineage>
</organism>
<protein>
    <recommendedName>
        <fullName>Aminoacyl tRNA synthase complex-interacting multifunctional protein 2</fullName>
    </recommendedName>
    <alternativeName>
        <fullName>Multisynthase complex auxiliary component p38</fullName>
    </alternativeName>
    <alternativeName>
        <fullName>Protein JTV-1</fullName>
    </alternativeName>
</protein>
<keyword id="KW-0053">Apoptosis</keyword>
<keyword id="KW-0963">Cytoplasm</keyword>
<keyword id="KW-0217">Developmental protein</keyword>
<keyword id="KW-0221">Differentiation</keyword>
<keyword id="KW-0539">Nucleus</keyword>
<keyword id="KW-0597">Phosphoprotein</keyword>
<keyword id="KW-0648">Protein biosynthesis</keyword>
<keyword id="KW-1185">Reference proteome</keyword>
<keyword id="KW-0832">Ubl conjugation</keyword>
<comment type="function">
    <text evidence="2">Required for assembly and stability of the aminoacyl-tRNA synthase complex. Mediates ubiquitination and degradation of FUBP1, a transcriptional activator of MYC, leading to MYC down-regulation which is required for aveolar type II cell differentiation. Blocks MDM2-mediated ubiquitination and degradation of p53/TP53. Functions as a proapoptotic factor.</text>
</comment>
<comment type="subunit">
    <text evidence="2">Part of the multisynthetase complex (MSC), a multisubunit complex that groups tRNA ligases for Arg (RARS1), Asp (DARS1), Gln (QARS1), Ile (IARS1), Leu (LARS1), Lys (KARS1), Met (MARS1) the bifunctional ligase for Glu and Pro (EPRS1) and the auxiliary subunits AIMP1/p43, AIMP2/p38 and EEF1E1/p18. Interacts (via N-terminus) with KARS1. Interacts with EPRS1. Forms a linear complex that contains MARS1, EEF1E1, EPRS1 and AIMP2 that is at the core of the multisubunit complex. Binds FUBP1 (via C-terminus). Interacts in both its unphosphorylated and phosphorylated forms with p53/TP53 (via N-terminus) in the nucleus following UV irradiation. Interacts (via N-terminus) with PRKN/parkin (via first RING-type domain). Interacts with TARS3.</text>
</comment>
<comment type="subcellular location">
    <subcellularLocation>
        <location evidence="3">Cytoplasm</location>
        <location evidence="3">Cytosol</location>
    </subcellularLocation>
    <subcellularLocation>
        <location evidence="3">Nucleus</location>
    </subcellularLocation>
    <text evidence="3">Following DNA damage, dissociates from the aminoacyl-tRNA synthase complex and translocates from the cytoplasm to the nucleus.</text>
</comment>
<comment type="PTM">
    <text evidence="1">Phosphorylated on serine residues in response to UV irradiation.</text>
</comment>
<comment type="PTM">
    <text evidence="1">Ubiquitinated by PRKN, leading to its degradation by the proteasome.</text>
</comment>
<feature type="chain" id="PRO_0000221128" description="Aminoacyl tRNA synthase complex-interacting multifunctional protein 2">
    <location>
        <begin position="1"/>
        <end position="320"/>
    </location>
</feature>
<feature type="domain" description="GST C-terminal">
    <location>
        <begin position="220"/>
        <end position="317"/>
    </location>
</feature>
<feature type="region of interest" description="Disordered" evidence="4">
    <location>
        <begin position="31"/>
        <end position="52"/>
    </location>
</feature>
<feature type="region of interest" description="Interaction with PRKN" evidence="1">
    <location>
        <begin position="82"/>
        <end position="162"/>
    </location>
</feature>
<feature type="region of interest" description="Interaction with TP53" evidence="1">
    <location>
        <begin position="162"/>
        <end position="225"/>
    </location>
</feature>
<feature type="modified residue" description="Phosphoserine" evidence="3">
    <location>
        <position position="36"/>
    </location>
</feature>
<reference key="1">
    <citation type="journal article" date="1999" name="J. Mol. Biol.">
        <title>Macromolecular assemblage of aminoacyl-tRNA synthetases: identification of protein-protein interactions and characterization of a core protein.</title>
        <authorList>
            <person name="Quevillon S."/>
            <person name="Robinson J.-C."/>
            <person name="Berthonneau E."/>
            <person name="Siatecka M."/>
            <person name="Mirande M."/>
        </authorList>
    </citation>
    <scope>NUCLEOTIDE SEQUENCE [MRNA]</scope>
    <source>
        <tissue>Ovary</tissue>
    </source>
</reference>
<reference key="2">
    <citation type="journal article" date="2011" name="Nat. Biotechnol.">
        <title>The genomic sequence of the Chinese hamster ovary (CHO)-K1 cell line.</title>
        <authorList>
            <person name="Xu X."/>
            <person name="Nagarajan H."/>
            <person name="Lewis N.E."/>
            <person name="Pan S."/>
            <person name="Cai Z."/>
            <person name="Liu X."/>
            <person name="Chen W."/>
            <person name="Xie M."/>
            <person name="Wang W."/>
            <person name="Hammond S."/>
            <person name="Andersen M.R."/>
            <person name="Neff N."/>
            <person name="Passarelli B."/>
            <person name="Koh W."/>
            <person name="Fan H.C."/>
            <person name="Wang J."/>
            <person name="Gui Y."/>
            <person name="Lee K.H."/>
            <person name="Betenbaugh M.J."/>
            <person name="Quake S.R."/>
            <person name="Famili I."/>
            <person name="Palsson B.O."/>
            <person name="Wang J."/>
        </authorList>
    </citation>
    <scope>NUCLEOTIDE SEQUENCE [LARGE SCALE GENOMIC DNA]</scope>
</reference>
<reference key="3">
    <citation type="journal article" date="2013" name="Nat. Biotechnol.">
        <title>Chinese hamster genome sequenced from sorted chromosomes.</title>
        <authorList>
            <person name="Brinkrolf K."/>
            <person name="Rupp O."/>
            <person name="Laux H."/>
            <person name="Kollin F."/>
            <person name="Ernst W."/>
            <person name="Linke B."/>
            <person name="Kofler R."/>
            <person name="Romand S."/>
            <person name="Hesse F."/>
            <person name="Budach W.E."/>
            <person name="Galosy S."/>
            <person name="Muller D."/>
            <person name="Noll T."/>
            <person name="Wienberg J."/>
            <person name="Jostock T."/>
            <person name="Leonard M."/>
            <person name="Grillari J."/>
            <person name="Tauch A."/>
            <person name="Goesmann A."/>
            <person name="Helk B."/>
            <person name="Mott J.E."/>
            <person name="Puhler A."/>
            <person name="Borth N."/>
        </authorList>
    </citation>
    <scope>NUCLEOTIDE SEQUENCE [LARGE SCALE GENOMIC DNA]</scope>
</reference>
<sequence>MPMYQVKSYHGGSAPLRVELPTCMYRLPNVHSKTTSPATDAGHVQETSEPSLQALESRQDDILKRLYELKAAVDGLSKMIHTPDADLDVTNILQADEPVPLTTNALDLNLVLGKDYGALKDIVINANPASPPISLLVLHRLLCERYRVLSTVHTHSSVKNVPENLLKCFGEQARKQSRHEYQLGFTLIWKNVPKTQMKFSVQTMCPIEGEGNIARFLFSLFGQKHSAVNLTLIDSWVDIAMFQLKEGSSKERAAVFRSMNSALGKSPWLVGNELTVADVVLWSVLQQTGDGSGVAPANVQRWLKSCENLVPFSTALQLLK</sequence>
<accession>Q9WVM7</accession>
<accession>G3GVA8</accession>
<gene>
    <name type="primary">AIMP2</name>
    <name type="synonym">JTV1</name>
</gene>
<proteinExistence type="evidence at transcript level"/>
<name>AIMP2_CRIGR</name>